<dbReference type="EC" id="6.1.1.14" evidence="1"/>
<dbReference type="EMBL" id="AM040264">
    <property type="protein sequence ID" value="CAJ10387.1"/>
    <property type="molecule type" value="Genomic_DNA"/>
</dbReference>
<dbReference type="RefSeq" id="WP_002963561.1">
    <property type="nucleotide sequence ID" value="NZ_KN046823.1"/>
</dbReference>
<dbReference type="SMR" id="Q2YME4"/>
<dbReference type="STRING" id="359391.BAB1_0431"/>
<dbReference type="KEGG" id="bmf:BAB1_0431"/>
<dbReference type="PATRIC" id="fig|359391.11.peg.2471"/>
<dbReference type="HOGENOM" id="CLU_057066_1_0_5"/>
<dbReference type="PhylomeDB" id="Q2YME4"/>
<dbReference type="Proteomes" id="UP000002719">
    <property type="component" value="Chromosome I"/>
</dbReference>
<dbReference type="GO" id="GO:0005829">
    <property type="term" value="C:cytosol"/>
    <property type="evidence" value="ECO:0007669"/>
    <property type="project" value="TreeGrafter"/>
</dbReference>
<dbReference type="GO" id="GO:0005524">
    <property type="term" value="F:ATP binding"/>
    <property type="evidence" value="ECO:0007669"/>
    <property type="project" value="UniProtKB-UniRule"/>
</dbReference>
<dbReference type="GO" id="GO:0004820">
    <property type="term" value="F:glycine-tRNA ligase activity"/>
    <property type="evidence" value="ECO:0007669"/>
    <property type="project" value="UniProtKB-UniRule"/>
</dbReference>
<dbReference type="GO" id="GO:0006426">
    <property type="term" value="P:glycyl-tRNA aminoacylation"/>
    <property type="evidence" value="ECO:0007669"/>
    <property type="project" value="UniProtKB-UniRule"/>
</dbReference>
<dbReference type="CDD" id="cd00733">
    <property type="entry name" value="GlyRS_alpha_core"/>
    <property type="match status" value="1"/>
</dbReference>
<dbReference type="FunFam" id="3.30.930.10:FF:000006">
    <property type="entry name" value="Glycine--tRNA ligase alpha subunit"/>
    <property type="match status" value="1"/>
</dbReference>
<dbReference type="Gene3D" id="3.30.930.10">
    <property type="entry name" value="Bira Bifunctional Protein, Domain 2"/>
    <property type="match status" value="1"/>
</dbReference>
<dbReference type="Gene3D" id="1.20.58.180">
    <property type="entry name" value="Class II aaRS and biotin synthetases, domain 2"/>
    <property type="match status" value="1"/>
</dbReference>
<dbReference type="HAMAP" id="MF_00254">
    <property type="entry name" value="Gly_tRNA_synth_alpha"/>
    <property type="match status" value="1"/>
</dbReference>
<dbReference type="InterPro" id="IPR045864">
    <property type="entry name" value="aa-tRNA-synth_II/BPL/LPL"/>
</dbReference>
<dbReference type="InterPro" id="IPR006194">
    <property type="entry name" value="Gly-tRNA-synth_heterodimer"/>
</dbReference>
<dbReference type="InterPro" id="IPR002310">
    <property type="entry name" value="Gly-tRNA_ligase_asu"/>
</dbReference>
<dbReference type="NCBIfam" id="TIGR00388">
    <property type="entry name" value="glyQ"/>
    <property type="match status" value="1"/>
</dbReference>
<dbReference type="NCBIfam" id="NF006827">
    <property type="entry name" value="PRK09348.1"/>
    <property type="match status" value="1"/>
</dbReference>
<dbReference type="PANTHER" id="PTHR30075:SF2">
    <property type="entry name" value="GLYCINE--TRNA LIGASE, CHLOROPLASTIC_MITOCHONDRIAL 2"/>
    <property type="match status" value="1"/>
</dbReference>
<dbReference type="PANTHER" id="PTHR30075">
    <property type="entry name" value="GLYCYL-TRNA SYNTHETASE"/>
    <property type="match status" value="1"/>
</dbReference>
<dbReference type="Pfam" id="PF02091">
    <property type="entry name" value="tRNA-synt_2e"/>
    <property type="match status" value="1"/>
</dbReference>
<dbReference type="PRINTS" id="PR01044">
    <property type="entry name" value="TRNASYNTHGA"/>
</dbReference>
<dbReference type="SUPFAM" id="SSF55681">
    <property type="entry name" value="Class II aaRS and biotin synthetases"/>
    <property type="match status" value="1"/>
</dbReference>
<dbReference type="PROSITE" id="PS50861">
    <property type="entry name" value="AA_TRNA_LIGASE_II_GLYAB"/>
    <property type="match status" value="1"/>
</dbReference>
<accession>Q2YME4</accession>
<proteinExistence type="inferred from homology"/>
<name>SYGA_BRUA2</name>
<sequence>MHPTRSFQGLILTLHNYWAEHGCAILQPYDMEVGAGTFHPATTLRSLGPKPWKAAYVQPSRRPKDGRYGENPNRLQHYYQYQVLIKPSPPNLQDLYLGSLKAIGLDPTLHDVRFVEDDWESPTLGAWGLGWECWCDGMEVSQFTYFQQVCGIECSPVAGELTYGLERLAMYVQGVDNVYDLNFNGLEGDEKVTYGDVFLQAEQEYSRYNFEMANTETLHQHFIDAERECEAILKAGSTGENSLHKCVFPAYDQCIKASHVFNLMDARGVISVTERQGYILRVRNLARQCGEAFLLTDAGGFNFKREGE</sequence>
<evidence type="ECO:0000255" key="1">
    <source>
        <dbReference type="HAMAP-Rule" id="MF_00254"/>
    </source>
</evidence>
<keyword id="KW-0030">Aminoacyl-tRNA synthetase</keyword>
<keyword id="KW-0067">ATP-binding</keyword>
<keyword id="KW-0963">Cytoplasm</keyword>
<keyword id="KW-0436">Ligase</keyword>
<keyword id="KW-0547">Nucleotide-binding</keyword>
<keyword id="KW-0648">Protein biosynthesis</keyword>
<keyword id="KW-1185">Reference proteome</keyword>
<reference key="1">
    <citation type="journal article" date="2005" name="Infect. Immun.">
        <title>Whole-genome analyses of speciation events in pathogenic Brucellae.</title>
        <authorList>
            <person name="Chain P.S."/>
            <person name="Comerci D.J."/>
            <person name="Tolmasky M.E."/>
            <person name="Larimer F.W."/>
            <person name="Malfatti S.A."/>
            <person name="Vergez L.M."/>
            <person name="Aguero F."/>
            <person name="Land M.L."/>
            <person name="Ugalde R.A."/>
            <person name="Garcia E."/>
        </authorList>
    </citation>
    <scope>NUCLEOTIDE SEQUENCE [LARGE SCALE GENOMIC DNA]</scope>
    <source>
        <strain>2308</strain>
    </source>
</reference>
<feature type="chain" id="PRO_1000047402" description="Glycine--tRNA ligase alpha subunit">
    <location>
        <begin position="1"/>
        <end position="308"/>
    </location>
</feature>
<comment type="catalytic activity">
    <reaction evidence="1">
        <text>tRNA(Gly) + glycine + ATP = glycyl-tRNA(Gly) + AMP + diphosphate</text>
        <dbReference type="Rhea" id="RHEA:16013"/>
        <dbReference type="Rhea" id="RHEA-COMP:9664"/>
        <dbReference type="Rhea" id="RHEA-COMP:9683"/>
        <dbReference type="ChEBI" id="CHEBI:30616"/>
        <dbReference type="ChEBI" id="CHEBI:33019"/>
        <dbReference type="ChEBI" id="CHEBI:57305"/>
        <dbReference type="ChEBI" id="CHEBI:78442"/>
        <dbReference type="ChEBI" id="CHEBI:78522"/>
        <dbReference type="ChEBI" id="CHEBI:456215"/>
        <dbReference type="EC" id="6.1.1.14"/>
    </reaction>
</comment>
<comment type="subunit">
    <text evidence="1">Tetramer of two alpha and two beta subunits.</text>
</comment>
<comment type="subcellular location">
    <subcellularLocation>
        <location evidence="1">Cytoplasm</location>
    </subcellularLocation>
</comment>
<comment type="similarity">
    <text evidence="1">Belongs to the class-II aminoacyl-tRNA synthetase family.</text>
</comment>
<protein>
    <recommendedName>
        <fullName evidence="1">Glycine--tRNA ligase alpha subunit</fullName>
        <ecNumber evidence="1">6.1.1.14</ecNumber>
    </recommendedName>
    <alternativeName>
        <fullName evidence="1">Glycyl-tRNA synthetase alpha subunit</fullName>
        <shortName evidence="1">GlyRS</shortName>
    </alternativeName>
</protein>
<organism>
    <name type="scientific">Brucella abortus (strain 2308)</name>
    <dbReference type="NCBI Taxonomy" id="359391"/>
    <lineage>
        <taxon>Bacteria</taxon>
        <taxon>Pseudomonadati</taxon>
        <taxon>Pseudomonadota</taxon>
        <taxon>Alphaproteobacteria</taxon>
        <taxon>Hyphomicrobiales</taxon>
        <taxon>Brucellaceae</taxon>
        <taxon>Brucella/Ochrobactrum group</taxon>
        <taxon>Brucella</taxon>
    </lineage>
</organism>
<gene>
    <name evidence="1" type="primary">glyQ</name>
    <name type="ordered locus">BAB1_0431</name>
</gene>